<accession>Q97QV8</accession>
<keyword id="KW-0963">Cytoplasm</keyword>
<keyword id="KW-0238">DNA-binding</keyword>
<keyword id="KW-0520">NAD</keyword>
<keyword id="KW-1185">Reference proteome</keyword>
<keyword id="KW-0678">Repressor</keyword>
<keyword id="KW-0804">Transcription</keyword>
<keyword id="KW-0805">Transcription regulation</keyword>
<feature type="chain" id="PRO_0000097918" description="Redox-sensing transcriptional repressor Rex">
    <location>
        <begin position="1"/>
        <end position="213"/>
    </location>
</feature>
<feature type="DNA-binding region" description="H-T-H motif" evidence="2">
    <location>
        <begin position="18"/>
        <end position="57"/>
    </location>
</feature>
<feature type="binding site" evidence="2">
    <location>
        <begin position="92"/>
        <end position="97"/>
    </location>
    <ligand>
        <name>NAD(+)</name>
        <dbReference type="ChEBI" id="CHEBI:57540"/>
    </ligand>
</feature>
<sequence>MKDKQFAIPKATAKRLSLYYRIFKRFHAEKIERANSKQIAEAIGIDSATVRRDFSYFGELGRRGFGYDVKKLMTFFADLLNDNSITNVMLVGIGNMGHALLHYRFHERNKMKIIMAFDLDDHPEVGTQTPDGIPIYGISQIKDKIKDADVKTAILTVPSVKSQEVANLLVDAGVKGILSFSPVHLHLPKDVVVQYVDLTSELQTLLYFMRKED</sequence>
<name>REX_STRPN</name>
<evidence type="ECO:0000250" key="1">
    <source>
        <dbReference type="UniProtKB" id="Q04KJ6"/>
    </source>
</evidence>
<evidence type="ECO:0000255" key="2">
    <source>
        <dbReference type="HAMAP-Rule" id="MF_01131"/>
    </source>
</evidence>
<evidence type="ECO:0000305" key="3"/>
<organism>
    <name type="scientific">Streptococcus pneumoniae serotype 4 (strain ATCC BAA-334 / TIGR4)</name>
    <dbReference type="NCBI Taxonomy" id="170187"/>
    <lineage>
        <taxon>Bacteria</taxon>
        <taxon>Bacillati</taxon>
        <taxon>Bacillota</taxon>
        <taxon>Bacilli</taxon>
        <taxon>Lactobacillales</taxon>
        <taxon>Streptococcaceae</taxon>
        <taxon>Streptococcus</taxon>
    </lineage>
</organism>
<protein>
    <recommendedName>
        <fullName evidence="2">Redox-sensing transcriptional repressor Rex</fullName>
    </recommendedName>
</protein>
<gene>
    <name evidence="2" type="primary">rex</name>
    <name type="ordered locus">SP_1090</name>
</gene>
<proteinExistence type="evidence at protein level"/>
<dbReference type="EMBL" id="AE005672">
    <property type="protein sequence ID" value="AAK75202.1"/>
    <property type="molecule type" value="Genomic_DNA"/>
</dbReference>
<dbReference type="PIR" id="A95126">
    <property type="entry name" value="A95126"/>
</dbReference>
<dbReference type="RefSeq" id="WP_000653403.1">
    <property type="nucleotide sequence ID" value="NZ_CP155539.1"/>
</dbReference>
<dbReference type="SMR" id="Q97QV8"/>
<dbReference type="IntAct" id="Q97QV8">
    <property type="interactions" value="4"/>
</dbReference>
<dbReference type="PaxDb" id="170187-SP_1090"/>
<dbReference type="EnsemblBacteria" id="AAK75202">
    <property type="protein sequence ID" value="AAK75202"/>
    <property type="gene ID" value="SP_1090"/>
</dbReference>
<dbReference type="KEGG" id="spn:SP_1090"/>
<dbReference type="eggNOG" id="COG2344">
    <property type="taxonomic scope" value="Bacteria"/>
</dbReference>
<dbReference type="PhylomeDB" id="Q97QV8"/>
<dbReference type="BioCyc" id="SPNE170187:G1FZB-1119-MONOMER"/>
<dbReference type="Proteomes" id="UP000000585">
    <property type="component" value="Chromosome"/>
</dbReference>
<dbReference type="GO" id="GO:0005737">
    <property type="term" value="C:cytoplasm"/>
    <property type="evidence" value="ECO:0007669"/>
    <property type="project" value="UniProtKB-SubCell"/>
</dbReference>
<dbReference type="GO" id="GO:0003677">
    <property type="term" value="F:DNA binding"/>
    <property type="evidence" value="ECO:0007669"/>
    <property type="project" value="UniProtKB-UniRule"/>
</dbReference>
<dbReference type="GO" id="GO:0003700">
    <property type="term" value="F:DNA-binding transcription factor activity"/>
    <property type="evidence" value="ECO:0007669"/>
    <property type="project" value="UniProtKB-UniRule"/>
</dbReference>
<dbReference type="GO" id="GO:0045892">
    <property type="term" value="P:negative regulation of DNA-templated transcription"/>
    <property type="evidence" value="ECO:0007669"/>
    <property type="project" value="InterPro"/>
</dbReference>
<dbReference type="GO" id="GO:0051775">
    <property type="term" value="P:response to redox state"/>
    <property type="evidence" value="ECO:0007669"/>
    <property type="project" value="InterPro"/>
</dbReference>
<dbReference type="Gene3D" id="3.40.50.720">
    <property type="entry name" value="NAD(P)-binding Rossmann-like Domain"/>
    <property type="match status" value="1"/>
</dbReference>
<dbReference type="Gene3D" id="1.10.10.10">
    <property type="entry name" value="Winged helix-like DNA-binding domain superfamily/Winged helix DNA-binding domain"/>
    <property type="match status" value="1"/>
</dbReference>
<dbReference type="HAMAP" id="MF_01131">
    <property type="entry name" value="Rex"/>
    <property type="match status" value="1"/>
</dbReference>
<dbReference type="InterPro" id="IPR003781">
    <property type="entry name" value="CoA-bd"/>
</dbReference>
<dbReference type="InterPro" id="IPR036291">
    <property type="entry name" value="NAD(P)-bd_dom_sf"/>
</dbReference>
<dbReference type="InterPro" id="IPR009718">
    <property type="entry name" value="Rex_DNA-bd_C_dom"/>
</dbReference>
<dbReference type="InterPro" id="IPR022876">
    <property type="entry name" value="Tscrpt_rep_Rex"/>
</dbReference>
<dbReference type="InterPro" id="IPR036388">
    <property type="entry name" value="WH-like_DNA-bd_sf"/>
</dbReference>
<dbReference type="InterPro" id="IPR036390">
    <property type="entry name" value="WH_DNA-bd_sf"/>
</dbReference>
<dbReference type="NCBIfam" id="NF003988">
    <property type="entry name" value="PRK05472.1-1"/>
    <property type="match status" value="1"/>
</dbReference>
<dbReference type="NCBIfam" id="NF003989">
    <property type="entry name" value="PRK05472.1-3"/>
    <property type="match status" value="1"/>
</dbReference>
<dbReference type="NCBIfam" id="NF003991">
    <property type="entry name" value="PRK05472.1-5"/>
    <property type="match status" value="1"/>
</dbReference>
<dbReference type="NCBIfam" id="NF003994">
    <property type="entry name" value="PRK05472.2-3"/>
    <property type="match status" value="1"/>
</dbReference>
<dbReference type="NCBIfam" id="NF003995">
    <property type="entry name" value="PRK05472.2-4"/>
    <property type="match status" value="1"/>
</dbReference>
<dbReference type="NCBIfam" id="NF003996">
    <property type="entry name" value="PRK05472.2-5"/>
    <property type="match status" value="1"/>
</dbReference>
<dbReference type="PANTHER" id="PTHR35786">
    <property type="entry name" value="REDOX-SENSING TRANSCRIPTIONAL REPRESSOR REX"/>
    <property type="match status" value="1"/>
</dbReference>
<dbReference type="PANTHER" id="PTHR35786:SF1">
    <property type="entry name" value="REDOX-SENSING TRANSCRIPTIONAL REPRESSOR REX 1"/>
    <property type="match status" value="1"/>
</dbReference>
<dbReference type="Pfam" id="PF02629">
    <property type="entry name" value="CoA_binding"/>
    <property type="match status" value="1"/>
</dbReference>
<dbReference type="Pfam" id="PF06971">
    <property type="entry name" value="Put_DNA-bind_N"/>
    <property type="match status" value="1"/>
</dbReference>
<dbReference type="SMART" id="SM00881">
    <property type="entry name" value="CoA_binding"/>
    <property type="match status" value="1"/>
</dbReference>
<dbReference type="SUPFAM" id="SSF51735">
    <property type="entry name" value="NAD(P)-binding Rossmann-fold domains"/>
    <property type="match status" value="1"/>
</dbReference>
<dbReference type="SUPFAM" id="SSF46785">
    <property type="entry name" value="Winged helix' DNA-binding domain"/>
    <property type="match status" value="1"/>
</dbReference>
<reference key="1">
    <citation type="journal article" date="2001" name="Science">
        <title>Complete genome sequence of a virulent isolate of Streptococcus pneumoniae.</title>
        <authorList>
            <person name="Tettelin H."/>
            <person name="Nelson K.E."/>
            <person name="Paulsen I.T."/>
            <person name="Eisen J.A."/>
            <person name="Read T.D."/>
            <person name="Peterson S.N."/>
            <person name="Heidelberg J.F."/>
            <person name="DeBoy R.T."/>
            <person name="Haft D.H."/>
            <person name="Dodson R.J."/>
            <person name="Durkin A.S."/>
            <person name="Gwinn M.L."/>
            <person name="Kolonay J.F."/>
            <person name="Nelson W.C."/>
            <person name="Peterson J.D."/>
            <person name="Umayam L.A."/>
            <person name="White O."/>
            <person name="Salzberg S.L."/>
            <person name="Lewis M.R."/>
            <person name="Radune D."/>
            <person name="Holtzapple E.K."/>
            <person name="Khouri H.M."/>
            <person name="Wolf A.M."/>
            <person name="Utterback T.R."/>
            <person name="Hansen C.L."/>
            <person name="McDonald L.A."/>
            <person name="Feldblyum T.V."/>
            <person name="Angiuoli S.V."/>
            <person name="Dickinson T."/>
            <person name="Hickey E.K."/>
            <person name="Holt I.E."/>
            <person name="Loftus B.J."/>
            <person name="Yang F."/>
            <person name="Smith H.O."/>
            <person name="Venter J.C."/>
            <person name="Dougherty B.A."/>
            <person name="Morrison D.A."/>
            <person name="Hollingshead S.K."/>
            <person name="Fraser C.M."/>
        </authorList>
    </citation>
    <scope>NUCLEOTIDE SEQUENCE [LARGE SCALE GENOMIC DNA]</scope>
    <source>
        <strain>ATCC BAA-334 / TIGR4</strain>
    </source>
</reference>
<comment type="function">
    <text evidence="1 2">Modulates transcription in response to changes in cellular NADH/NAD(+) redox state (By similarity). Binds to the promoter of the aldehyde-alcohol dehydrogenase adhE gene (By similarity). Functions as a redox-dependent repressor of adhE expression (By similarity).</text>
</comment>
<comment type="subunit">
    <text evidence="2">Homodimer.</text>
</comment>
<comment type="interaction">
    <interactant intactId="EBI-2207177">
        <id>Q97QV8</id>
    </interactant>
    <interactant intactId="EBI-2207053">
        <id>Q97SE5</id>
        <label>gatC</label>
    </interactant>
    <organismsDiffer>false</organismsDiffer>
    <experiments>2</experiments>
</comment>
<comment type="interaction">
    <interactant intactId="EBI-2207177">
        <id>Q97QV8</id>
    </interactant>
    <interactant intactId="EBI-2206949">
        <id>Q97NV3</id>
        <label>groES</label>
    </interactant>
    <organismsDiffer>false</organismsDiffer>
    <experiments>2</experiments>
</comment>
<comment type="interaction">
    <interactant intactId="EBI-2207177">
        <id>Q97QV8</id>
    </interactant>
    <interactant intactId="EBI-2207382">
        <id>P0A4S9</id>
        <label>SP_1877</label>
    </interactant>
    <organismsDiffer>false</organismsDiffer>
    <experiments>2</experiments>
</comment>
<comment type="interaction">
    <interactant intactId="EBI-2207177">
        <id>Q97QV8</id>
    </interactant>
    <interactant intactId="EBI-2206983">
        <id>Q97SR4</id>
        <label>uppS</label>
    </interactant>
    <organismsDiffer>false</organismsDiffer>
    <experiments>2</experiments>
</comment>
<comment type="subcellular location">
    <subcellularLocation>
        <location evidence="2">Cytoplasm</location>
    </subcellularLocation>
</comment>
<comment type="similarity">
    <text evidence="2 3">Belongs to the transcriptional regulatory Rex family.</text>
</comment>